<accession>Q6G0D0</accession>
<keyword id="KW-0997">Cell inner membrane</keyword>
<keyword id="KW-1003">Cell membrane</keyword>
<keyword id="KW-0350">Heme biosynthesis</keyword>
<keyword id="KW-0472">Membrane</keyword>
<keyword id="KW-0808">Transferase</keyword>
<keyword id="KW-0812">Transmembrane</keyword>
<keyword id="KW-1133">Transmembrane helix</keyword>
<dbReference type="EC" id="2.5.1.141" evidence="1"/>
<dbReference type="EMBL" id="BX897700">
    <property type="protein sequence ID" value="CAF25859.1"/>
    <property type="molecule type" value="Genomic_DNA"/>
</dbReference>
<dbReference type="SMR" id="Q6G0D0"/>
<dbReference type="KEGG" id="bqu:BQ03590"/>
<dbReference type="eggNOG" id="COG0109">
    <property type="taxonomic scope" value="Bacteria"/>
</dbReference>
<dbReference type="HOGENOM" id="CLU_029631_0_2_5"/>
<dbReference type="OrthoDB" id="9814417at2"/>
<dbReference type="UniPathway" id="UPA00834">
    <property type="reaction ID" value="UER00712"/>
</dbReference>
<dbReference type="Proteomes" id="UP000000597">
    <property type="component" value="Chromosome"/>
</dbReference>
<dbReference type="GO" id="GO:0005886">
    <property type="term" value="C:plasma membrane"/>
    <property type="evidence" value="ECO:0007669"/>
    <property type="project" value="UniProtKB-SubCell"/>
</dbReference>
<dbReference type="GO" id="GO:0008495">
    <property type="term" value="F:protoheme IX farnesyltransferase activity"/>
    <property type="evidence" value="ECO:0007669"/>
    <property type="project" value="UniProtKB-UniRule"/>
</dbReference>
<dbReference type="GO" id="GO:0048034">
    <property type="term" value="P:heme O biosynthetic process"/>
    <property type="evidence" value="ECO:0007669"/>
    <property type="project" value="UniProtKB-UniRule"/>
</dbReference>
<dbReference type="CDD" id="cd13957">
    <property type="entry name" value="PT_UbiA_Cox10"/>
    <property type="match status" value="1"/>
</dbReference>
<dbReference type="Gene3D" id="1.10.357.140">
    <property type="entry name" value="UbiA prenyltransferase"/>
    <property type="match status" value="1"/>
</dbReference>
<dbReference type="HAMAP" id="MF_00154">
    <property type="entry name" value="CyoE_CtaB"/>
    <property type="match status" value="1"/>
</dbReference>
<dbReference type="InterPro" id="IPR006369">
    <property type="entry name" value="Protohaem_IX_farnesylTrfase"/>
</dbReference>
<dbReference type="InterPro" id="IPR000537">
    <property type="entry name" value="UbiA_prenyltransferase"/>
</dbReference>
<dbReference type="InterPro" id="IPR030470">
    <property type="entry name" value="UbiA_prenylTrfase_CS"/>
</dbReference>
<dbReference type="InterPro" id="IPR044878">
    <property type="entry name" value="UbiA_sf"/>
</dbReference>
<dbReference type="NCBIfam" id="TIGR01473">
    <property type="entry name" value="cyoE_ctaB"/>
    <property type="match status" value="1"/>
</dbReference>
<dbReference type="NCBIfam" id="NF003349">
    <property type="entry name" value="PRK04375.1-2"/>
    <property type="match status" value="1"/>
</dbReference>
<dbReference type="PANTHER" id="PTHR43448:SF7">
    <property type="entry name" value="4-HYDROXYBENZOATE SOLANESYLTRANSFERASE"/>
    <property type="match status" value="1"/>
</dbReference>
<dbReference type="PANTHER" id="PTHR43448">
    <property type="entry name" value="PROTOHEME IX FARNESYLTRANSFERASE, MITOCHONDRIAL"/>
    <property type="match status" value="1"/>
</dbReference>
<dbReference type="Pfam" id="PF01040">
    <property type="entry name" value="UbiA"/>
    <property type="match status" value="1"/>
</dbReference>
<dbReference type="PROSITE" id="PS00943">
    <property type="entry name" value="UBIA"/>
    <property type="match status" value="1"/>
</dbReference>
<evidence type="ECO:0000255" key="1">
    <source>
        <dbReference type="HAMAP-Rule" id="MF_00154"/>
    </source>
</evidence>
<proteinExistence type="inferred from homology"/>
<gene>
    <name evidence="1" type="primary">ctaB</name>
    <name type="ordered locus">BQ03590</name>
</gene>
<sequence>MFVSRELSDASGKSIPPKSGIYDYITLLKPRVMSLVVFTALVGLVVSPVSINPWYGFLAILCIAIGGGGAGVLNMWYDADIDAVMKRTKNRPIPSGKISSRKAFVFGMVLSMLSVLMMGKFINWFAALLLAFTIFFYIVIYTIWLKRRTPQNIVIGGAAGAFPPMIGCAAATGTVNIESFLLFLIIFMWTPPHFWSLSLFSSLDYGAAGIPMMPNVRGERSTKKQILFYTILMTISAAGPFIIDFAGIFYAIFSTILSVIFIYFAYRLWKADTYDATILMAKKTFFFSLFYLAAIFGILLIEFLVWYFIIL</sequence>
<feature type="chain" id="PRO_0000327012" description="Protoheme IX farnesyltransferase">
    <location>
        <begin position="1"/>
        <end position="311"/>
    </location>
</feature>
<feature type="transmembrane region" description="Helical" evidence="1">
    <location>
        <begin position="32"/>
        <end position="52"/>
    </location>
</feature>
<feature type="transmembrane region" description="Helical" evidence="1">
    <location>
        <begin position="53"/>
        <end position="73"/>
    </location>
</feature>
<feature type="transmembrane region" description="Helical" evidence="1">
    <location>
        <begin position="104"/>
        <end position="124"/>
    </location>
</feature>
<feature type="transmembrane region" description="Helical" evidence="1">
    <location>
        <begin position="125"/>
        <end position="145"/>
    </location>
</feature>
<feature type="transmembrane region" description="Helical" evidence="1">
    <location>
        <begin position="153"/>
        <end position="173"/>
    </location>
</feature>
<feature type="transmembrane region" description="Helical" evidence="1">
    <location>
        <begin position="180"/>
        <end position="200"/>
    </location>
</feature>
<feature type="transmembrane region" description="Helical" evidence="1">
    <location>
        <begin position="224"/>
        <end position="244"/>
    </location>
</feature>
<feature type="transmembrane region" description="Helical" evidence="1">
    <location>
        <begin position="245"/>
        <end position="265"/>
    </location>
</feature>
<feature type="transmembrane region" description="Helical" evidence="1">
    <location>
        <begin position="290"/>
        <end position="310"/>
    </location>
</feature>
<reference key="1">
    <citation type="journal article" date="2004" name="Proc. Natl. Acad. Sci. U.S.A.">
        <title>The louse-borne human pathogen Bartonella quintana is a genomic derivative of the zoonotic agent Bartonella henselae.</title>
        <authorList>
            <person name="Alsmark U.C.M."/>
            <person name="Frank A.C."/>
            <person name="Karlberg E.O."/>
            <person name="Legault B.-A."/>
            <person name="Ardell D.H."/>
            <person name="Canbaeck B."/>
            <person name="Eriksson A.-S."/>
            <person name="Naeslund A.K."/>
            <person name="Handley S.A."/>
            <person name="Huvet M."/>
            <person name="La Scola B."/>
            <person name="Holmberg M."/>
            <person name="Andersson S.G.E."/>
        </authorList>
    </citation>
    <scope>NUCLEOTIDE SEQUENCE [LARGE SCALE GENOMIC DNA]</scope>
    <source>
        <strain>Toulouse</strain>
    </source>
</reference>
<organism>
    <name type="scientific">Bartonella quintana (strain Toulouse)</name>
    <name type="common">Rochalimaea quintana</name>
    <dbReference type="NCBI Taxonomy" id="283165"/>
    <lineage>
        <taxon>Bacteria</taxon>
        <taxon>Pseudomonadati</taxon>
        <taxon>Pseudomonadota</taxon>
        <taxon>Alphaproteobacteria</taxon>
        <taxon>Hyphomicrobiales</taxon>
        <taxon>Bartonellaceae</taxon>
        <taxon>Bartonella</taxon>
    </lineage>
</organism>
<comment type="function">
    <text evidence="1">Converts heme B (protoheme IX) to heme O by substitution of the vinyl group on carbon 2 of heme B porphyrin ring with a hydroxyethyl farnesyl side group.</text>
</comment>
<comment type="catalytic activity">
    <reaction evidence="1">
        <text>heme b + (2E,6E)-farnesyl diphosphate + H2O = Fe(II)-heme o + diphosphate</text>
        <dbReference type="Rhea" id="RHEA:28070"/>
        <dbReference type="ChEBI" id="CHEBI:15377"/>
        <dbReference type="ChEBI" id="CHEBI:33019"/>
        <dbReference type="ChEBI" id="CHEBI:60344"/>
        <dbReference type="ChEBI" id="CHEBI:60530"/>
        <dbReference type="ChEBI" id="CHEBI:175763"/>
        <dbReference type="EC" id="2.5.1.141"/>
    </reaction>
</comment>
<comment type="pathway">
    <text evidence="1">Porphyrin-containing compound metabolism; heme O biosynthesis; heme O from protoheme: step 1/1.</text>
</comment>
<comment type="subcellular location">
    <subcellularLocation>
        <location evidence="1">Cell inner membrane</location>
        <topology evidence="1">Multi-pass membrane protein</topology>
    </subcellularLocation>
</comment>
<comment type="miscellaneous">
    <text evidence="1">Carbon 2 of the heme B porphyrin ring is defined according to the Fischer nomenclature.</text>
</comment>
<comment type="similarity">
    <text evidence="1">Belongs to the UbiA prenyltransferase family. Protoheme IX farnesyltransferase subfamily.</text>
</comment>
<name>COXX_BARQU</name>
<protein>
    <recommendedName>
        <fullName evidence="1">Protoheme IX farnesyltransferase</fullName>
        <ecNumber evidence="1">2.5.1.141</ecNumber>
    </recommendedName>
    <alternativeName>
        <fullName evidence="1">Heme B farnesyltransferase</fullName>
    </alternativeName>
    <alternativeName>
        <fullName evidence="1">Heme O synthase</fullName>
    </alternativeName>
</protein>